<organism>
    <name type="scientific">Chloroflexus aurantiacus (strain ATCC 29364 / DSM 637 / Y-400-fl)</name>
    <dbReference type="NCBI Taxonomy" id="480224"/>
    <lineage>
        <taxon>Bacteria</taxon>
        <taxon>Bacillati</taxon>
        <taxon>Chloroflexota</taxon>
        <taxon>Chloroflexia</taxon>
        <taxon>Chloroflexales</taxon>
        <taxon>Chloroflexineae</taxon>
        <taxon>Chloroflexaceae</taxon>
        <taxon>Chloroflexus</taxon>
    </lineage>
</organism>
<proteinExistence type="inferred from homology"/>
<gene>
    <name evidence="1" type="primary">leuD</name>
    <name type="ordered locus">Chy400_0181</name>
</gene>
<name>LEUD_CHLSY</name>
<comment type="function">
    <text evidence="1">Catalyzes the isomerization between 2-isopropylmalate and 3-isopropylmalate, via the formation of 2-isopropylmaleate.</text>
</comment>
<comment type="catalytic activity">
    <reaction evidence="1">
        <text>(2R,3S)-3-isopropylmalate = (2S)-2-isopropylmalate</text>
        <dbReference type="Rhea" id="RHEA:32287"/>
        <dbReference type="ChEBI" id="CHEBI:1178"/>
        <dbReference type="ChEBI" id="CHEBI:35121"/>
        <dbReference type="EC" id="4.2.1.33"/>
    </reaction>
</comment>
<comment type="pathway">
    <text evidence="1">Amino-acid biosynthesis; L-leucine biosynthesis; L-leucine from 3-methyl-2-oxobutanoate: step 2/4.</text>
</comment>
<comment type="subunit">
    <text evidence="1">Heterodimer of LeuC and LeuD.</text>
</comment>
<comment type="similarity">
    <text evidence="1">Belongs to the LeuD family. LeuD type 1 subfamily.</text>
</comment>
<reference key="1">
    <citation type="submission" date="2009-01" db="EMBL/GenBank/DDBJ databases">
        <title>Complete sequence of Chloroflexus sp. Y-400-fl.</title>
        <authorList>
            <consortium name="US DOE Joint Genome Institute"/>
            <person name="Lucas S."/>
            <person name="Copeland A."/>
            <person name="Lapidus A."/>
            <person name="Glavina del Rio T."/>
            <person name="Dalin E."/>
            <person name="Tice H."/>
            <person name="Bruce D."/>
            <person name="Goodwin L."/>
            <person name="Pitluck S."/>
            <person name="Sims D."/>
            <person name="Kiss H."/>
            <person name="Brettin T."/>
            <person name="Detter J.C."/>
            <person name="Han C."/>
            <person name="Larimer F."/>
            <person name="Land M."/>
            <person name="Hauser L."/>
            <person name="Kyrpides N."/>
            <person name="Ovchinnikova G."/>
            <person name="Bryant D.A."/>
            <person name="Richardson P."/>
        </authorList>
    </citation>
    <scope>NUCLEOTIDE SEQUENCE [LARGE SCALE GENOMIC DNA]</scope>
    <source>
        <strain>ATCC 29364 / DSM 637 / Y-400-fl</strain>
    </source>
</reference>
<feature type="chain" id="PRO_1000149409" description="3-isopropylmalate dehydratase small subunit">
    <location>
        <begin position="1"/>
        <end position="201"/>
    </location>
</feature>
<accession>B9LGN1</accession>
<evidence type="ECO:0000255" key="1">
    <source>
        <dbReference type="HAMAP-Rule" id="MF_01031"/>
    </source>
</evidence>
<dbReference type="EC" id="4.2.1.33" evidence="1"/>
<dbReference type="EMBL" id="CP001364">
    <property type="protein sequence ID" value="ACM51620.1"/>
    <property type="molecule type" value="Genomic_DNA"/>
</dbReference>
<dbReference type="SMR" id="B9LGN1"/>
<dbReference type="KEGG" id="chl:Chy400_0181"/>
<dbReference type="HOGENOM" id="CLU_081378_0_3_0"/>
<dbReference type="OrthoDB" id="9777465at2"/>
<dbReference type="UniPathway" id="UPA00048">
    <property type="reaction ID" value="UER00071"/>
</dbReference>
<dbReference type="GO" id="GO:0009316">
    <property type="term" value="C:3-isopropylmalate dehydratase complex"/>
    <property type="evidence" value="ECO:0007669"/>
    <property type="project" value="InterPro"/>
</dbReference>
<dbReference type="GO" id="GO:0003861">
    <property type="term" value="F:3-isopropylmalate dehydratase activity"/>
    <property type="evidence" value="ECO:0007669"/>
    <property type="project" value="UniProtKB-UniRule"/>
</dbReference>
<dbReference type="GO" id="GO:0009098">
    <property type="term" value="P:L-leucine biosynthetic process"/>
    <property type="evidence" value="ECO:0007669"/>
    <property type="project" value="UniProtKB-UniRule"/>
</dbReference>
<dbReference type="CDD" id="cd01577">
    <property type="entry name" value="IPMI_Swivel"/>
    <property type="match status" value="1"/>
</dbReference>
<dbReference type="FunFam" id="3.20.19.10:FF:000003">
    <property type="entry name" value="3-isopropylmalate dehydratase small subunit"/>
    <property type="match status" value="1"/>
</dbReference>
<dbReference type="Gene3D" id="3.20.19.10">
    <property type="entry name" value="Aconitase, domain 4"/>
    <property type="match status" value="1"/>
</dbReference>
<dbReference type="HAMAP" id="MF_01031">
    <property type="entry name" value="LeuD_type1"/>
    <property type="match status" value="1"/>
</dbReference>
<dbReference type="InterPro" id="IPR004431">
    <property type="entry name" value="3-IsopropMal_deHydase_ssu"/>
</dbReference>
<dbReference type="InterPro" id="IPR015928">
    <property type="entry name" value="Aconitase/3IPM_dehydase_swvl"/>
</dbReference>
<dbReference type="InterPro" id="IPR000573">
    <property type="entry name" value="AconitaseA/IPMdHydase_ssu_swvl"/>
</dbReference>
<dbReference type="InterPro" id="IPR033940">
    <property type="entry name" value="IPMI_Swivel"/>
</dbReference>
<dbReference type="InterPro" id="IPR050075">
    <property type="entry name" value="LeuD"/>
</dbReference>
<dbReference type="NCBIfam" id="TIGR00171">
    <property type="entry name" value="leuD"/>
    <property type="match status" value="1"/>
</dbReference>
<dbReference type="NCBIfam" id="NF002458">
    <property type="entry name" value="PRK01641.1"/>
    <property type="match status" value="1"/>
</dbReference>
<dbReference type="PANTHER" id="PTHR43345:SF5">
    <property type="entry name" value="3-ISOPROPYLMALATE DEHYDRATASE SMALL SUBUNIT"/>
    <property type="match status" value="1"/>
</dbReference>
<dbReference type="PANTHER" id="PTHR43345">
    <property type="entry name" value="3-ISOPROPYLMALATE DEHYDRATASE SMALL SUBUNIT 2-RELATED-RELATED"/>
    <property type="match status" value="1"/>
</dbReference>
<dbReference type="Pfam" id="PF00694">
    <property type="entry name" value="Aconitase_C"/>
    <property type="match status" value="1"/>
</dbReference>
<dbReference type="SUPFAM" id="SSF52016">
    <property type="entry name" value="LeuD/IlvD-like"/>
    <property type="match status" value="1"/>
</dbReference>
<keyword id="KW-0028">Amino-acid biosynthesis</keyword>
<keyword id="KW-0100">Branched-chain amino acid biosynthesis</keyword>
<keyword id="KW-0432">Leucine biosynthesis</keyword>
<keyword id="KW-0456">Lyase</keyword>
<sequence>MEPVSTITGKAVVLPVENIDTDQIIPARFLKVTDRSGLAAGLFEAWRYQADGTPNPDFPLNRPEAAGATILISGRNFGCGSSREHAPWALQDYGFKAVLAPSFADIFRSNSLKIGLLPVTIDQAVYDELVARYAADPQMHLTIDLATQTVTLPDGRQVHFPIDAFSKYCLLHGVDQLGFLLQQEEAIIAYEASHPQPVTTR</sequence>
<protein>
    <recommendedName>
        <fullName evidence="1">3-isopropylmalate dehydratase small subunit</fullName>
        <ecNumber evidence="1">4.2.1.33</ecNumber>
    </recommendedName>
    <alternativeName>
        <fullName evidence="1">Alpha-IPM isomerase</fullName>
        <shortName evidence="1">IPMI</shortName>
    </alternativeName>
    <alternativeName>
        <fullName evidence="1">Isopropylmalate isomerase</fullName>
    </alternativeName>
</protein>